<reference key="1">
    <citation type="journal article" date="1997" name="Science">
        <title>The complete genome sequence of Escherichia coli K-12.</title>
        <authorList>
            <person name="Blattner F.R."/>
            <person name="Plunkett G. III"/>
            <person name="Bloch C.A."/>
            <person name="Perna N.T."/>
            <person name="Burland V."/>
            <person name="Riley M."/>
            <person name="Collado-Vides J."/>
            <person name="Glasner J.D."/>
            <person name="Rode C.K."/>
            <person name="Mayhew G.F."/>
            <person name="Gregor J."/>
            <person name="Davis N.W."/>
            <person name="Kirkpatrick H.A."/>
            <person name="Goeden M.A."/>
            <person name="Rose D.J."/>
            <person name="Mau B."/>
            <person name="Shao Y."/>
        </authorList>
    </citation>
    <scope>NUCLEOTIDE SEQUENCE [LARGE SCALE GENOMIC DNA]</scope>
    <source>
        <strain>K12 / MG1655 / ATCC 47076</strain>
    </source>
</reference>
<reference key="2">
    <citation type="journal article" date="2006" name="Mol. Syst. Biol.">
        <title>Highly accurate genome sequences of Escherichia coli K-12 strains MG1655 and W3110.</title>
        <authorList>
            <person name="Hayashi K."/>
            <person name="Morooka N."/>
            <person name="Yamamoto Y."/>
            <person name="Fujita K."/>
            <person name="Isono K."/>
            <person name="Choi S."/>
            <person name="Ohtsubo E."/>
            <person name="Baba T."/>
            <person name="Wanner B.L."/>
            <person name="Mori H."/>
            <person name="Horiuchi T."/>
        </authorList>
    </citation>
    <scope>NUCLEOTIDE SEQUENCE [LARGE SCALE GENOMIC DNA]</scope>
    <source>
        <strain>K12 / W3110 / ATCC 27325 / DSM 5911</strain>
    </source>
</reference>
<reference key="3">
    <citation type="journal article" date="2002" name="Mol. Microbiol.">
        <title>Molecular characterization of long direct repeat (LDR) sequences expressing a stable mRNA encoding for a 35-amino-acid cell-killing peptide and a cis-encoded small antisense RNA in Escherichia coli.</title>
        <authorList>
            <person name="Kawano M."/>
            <person name="Oshima T."/>
            <person name="Kasai H."/>
            <person name="Mori H."/>
        </authorList>
    </citation>
    <scope>IDENTIFICATION</scope>
</reference>
<feature type="peptide" id="PRO_0000230293" description="Small toxic polypeptide LdrB">
    <location>
        <begin position="1"/>
        <end position="35"/>
    </location>
</feature>
<feature type="transmembrane region" description="Helical" evidence="2">
    <location>
        <begin position="10"/>
        <end position="30"/>
    </location>
</feature>
<organism>
    <name type="scientific">Escherichia coli (strain K12)</name>
    <dbReference type="NCBI Taxonomy" id="83333"/>
    <lineage>
        <taxon>Bacteria</taxon>
        <taxon>Pseudomonadati</taxon>
        <taxon>Pseudomonadota</taxon>
        <taxon>Gammaproteobacteria</taxon>
        <taxon>Enterobacterales</taxon>
        <taxon>Enterobacteriaceae</taxon>
        <taxon>Escherichia</taxon>
    </lineage>
</organism>
<protein>
    <recommendedName>
        <fullName>Small toxic polypeptide LdrB</fullName>
    </recommendedName>
</protein>
<sequence length="35" mass="3972">MTLAQFAMTFWHDLAAPILAGIITAAIVGWWRNRK</sequence>
<name>LDRB_ECOLI</name>
<dbReference type="EMBL" id="U00096">
    <property type="protein sequence ID" value="AAT48127.1"/>
    <property type="molecule type" value="Genomic_DNA"/>
</dbReference>
<dbReference type="EMBL" id="AP009048">
    <property type="protein sequence ID" value="BAE76393.1"/>
    <property type="molecule type" value="Genomic_DNA"/>
</dbReference>
<dbReference type="RefSeq" id="WP_000170963.1">
    <property type="nucleotide sequence ID" value="NZ_STEB01000023.1"/>
</dbReference>
<dbReference type="RefSeq" id="YP_025298.1">
    <property type="nucleotide sequence ID" value="NC_000913.3"/>
</dbReference>
<dbReference type="SMR" id="Q6BF87"/>
<dbReference type="FunCoup" id="Q6BF87">
    <property type="interactions" value="7"/>
</dbReference>
<dbReference type="STRING" id="511145.b4421"/>
<dbReference type="PaxDb" id="511145-b4421"/>
<dbReference type="EnsemblBacteria" id="AAT48127">
    <property type="protein sequence ID" value="AAT48127"/>
    <property type="gene ID" value="b4421"/>
</dbReference>
<dbReference type="GeneID" id="2847735"/>
<dbReference type="KEGG" id="ecj:JW5958"/>
<dbReference type="KEGG" id="eco:b4421"/>
<dbReference type="PATRIC" id="fig|511145.12.peg.1265"/>
<dbReference type="HOGENOM" id="CLU_212598_1_0_6"/>
<dbReference type="InParanoid" id="Q6BF87"/>
<dbReference type="PhylomeDB" id="Q6BF87"/>
<dbReference type="BioCyc" id="EcoCyc:MONOMER0-1602"/>
<dbReference type="PRO" id="PR:Q6BF87"/>
<dbReference type="Proteomes" id="UP000000625">
    <property type="component" value="Chromosome"/>
</dbReference>
<dbReference type="GO" id="GO:0005886">
    <property type="term" value="C:plasma membrane"/>
    <property type="evidence" value="ECO:0007669"/>
    <property type="project" value="UniProtKB-SubCell"/>
</dbReference>
<dbReference type="InterPro" id="IPR025253">
    <property type="entry name" value="Toxin_Ldr"/>
</dbReference>
<dbReference type="Pfam" id="PF13940">
    <property type="entry name" value="Ldr_toxin"/>
    <property type="match status" value="1"/>
</dbReference>
<gene>
    <name type="primary">ldrB</name>
    <name type="ordered locus">b4421</name>
    <name type="ordered locus">JW5958</name>
</gene>
<accession>Q6BF87</accession>
<accession>Q2MBG3</accession>
<proteinExistence type="inferred from homology"/>
<comment type="function">
    <text evidence="1">Toxic component of a type I toxin-antitoxin (TA) system. Overexpression causes rapid cell killing, probably by disrupting the cell inner membrane and disruption of ATP synthesis.</text>
</comment>
<comment type="subcellular location">
    <subcellularLocation>
        <location evidence="1">Cell inner membrane</location>
        <topology evidence="2">Single-pass membrane protein</topology>
    </subcellularLocation>
</comment>
<comment type="induction">
    <text evidence="3">Expression of the proteinaceous toxin is probably controlled by an antisense sRNA, in this case rdlB. Only a few of these TA systems have been mechanistically characterized; the mechanisms used to control expression of the toxin gene are not necessarily the same (Probable).</text>
</comment>
<comment type="similarity">
    <text evidence="3">Belongs to the Ldr toxic peptide family.</text>
</comment>
<keyword id="KW-0997">Cell inner membrane</keyword>
<keyword id="KW-1003">Cell membrane</keyword>
<keyword id="KW-0472">Membrane</keyword>
<keyword id="KW-1185">Reference proteome</keyword>
<keyword id="KW-1277">Toxin-antitoxin system</keyword>
<keyword id="KW-0812">Transmembrane</keyword>
<keyword id="KW-1133">Transmembrane helix</keyword>
<evidence type="ECO:0000250" key="1">
    <source>
        <dbReference type="UniProtKB" id="P0DPD0"/>
    </source>
</evidence>
<evidence type="ECO:0000255" key="2"/>
<evidence type="ECO:0000305" key="3"/>